<feature type="chain" id="PRO_0000173173" description="Large ribosomal subunit protein bL31">
    <location>
        <begin position="1"/>
        <end position="67"/>
    </location>
</feature>
<feature type="binding site" evidence="1">
    <location>
        <position position="16"/>
    </location>
    <ligand>
        <name>Zn(2+)</name>
        <dbReference type="ChEBI" id="CHEBI:29105"/>
    </ligand>
</feature>
<feature type="binding site" evidence="1">
    <location>
        <position position="18"/>
    </location>
    <ligand>
        <name>Zn(2+)</name>
        <dbReference type="ChEBI" id="CHEBI:29105"/>
    </ligand>
</feature>
<feature type="binding site" evidence="1">
    <location>
        <position position="36"/>
    </location>
    <ligand>
        <name>Zn(2+)</name>
        <dbReference type="ChEBI" id="CHEBI:29105"/>
    </ligand>
</feature>
<feature type="binding site" evidence="1">
    <location>
        <position position="39"/>
    </location>
    <ligand>
        <name>Zn(2+)</name>
        <dbReference type="ChEBI" id="CHEBI:29105"/>
    </ligand>
</feature>
<name>RL31_TREDE</name>
<evidence type="ECO:0000255" key="1">
    <source>
        <dbReference type="HAMAP-Rule" id="MF_00501"/>
    </source>
</evidence>
<evidence type="ECO:0000305" key="2"/>
<proteinExistence type="inferred from homology"/>
<reference key="1">
    <citation type="journal article" date="2004" name="Proc. Natl. Acad. Sci. U.S.A.">
        <title>Comparison of the genome of the oral pathogen Treponema denticola with other spirochete genomes.</title>
        <authorList>
            <person name="Seshadri R."/>
            <person name="Myers G.S.A."/>
            <person name="Tettelin H."/>
            <person name="Eisen J.A."/>
            <person name="Heidelberg J.F."/>
            <person name="Dodson R.J."/>
            <person name="Davidsen T.M."/>
            <person name="DeBoy R.T."/>
            <person name="Fouts D.E."/>
            <person name="Haft D.H."/>
            <person name="Selengut J."/>
            <person name="Ren Q."/>
            <person name="Brinkac L.M."/>
            <person name="Madupu R."/>
            <person name="Kolonay J.F."/>
            <person name="Durkin S.A."/>
            <person name="Daugherty S.C."/>
            <person name="Shetty J."/>
            <person name="Shvartsbeyn A."/>
            <person name="Gebregeorgis E."/>
            <person name="Geer K."/>
            <person name="Tsegaye G."/>
            <person name="Malek J.A."/>
            <person name="Ayodeji B."/>
            <person name="Shatsman S."/>
            <person name="McLeod M.P."/>
            <person name="Smajs D."/>
            <person name="Howell J.K."/>
            <person name="Pal S."/>
            <person name="Amin A."/>
            <person name="Vashisth P."/>
            <person name="McNeill T.Z."/>
            <person name="Xiang Q."/>
            <person name="Sodergren E."/>
            <person name="Baca E."/>
            <person name="Weinstock G.M."/>
            <person name="Norris S.J."/>
            <person name="Fraser C.M."/>
            <person name="Paulsen I.T."/>
        </authorList>
    </citation>
    <scope>NUCLEOTIDE SEQUENCE [LARGE SCALE GENOMIC DNA]</scope>
    <source>
        <strain>ATCC 35405 / DSM 14222 / CIP 103919 / JCM 8153 / KCTC 15104</strain>
    </source>
</reference>
<dbReference type="EMBL" id="AE017226">
    <property type="protein sequence ID" value="AAS12021.1"/>
    <property type="molecule type" value="Genomic_DNA"/>
</dbReference>
<dbReference type="RefSeq" id="NP_972110.1">
    <property type="nucleotide sequence ID" value="NC_002967.9"/>
</dbReference>
<dbReference type="RefSeq" id="WP_002669000.1">
    <property type="nucleotide sequence ID" value="NC_002967.9"/>
</dbReference>
<dbReference type="SMR" id="Q73MK4"/>
<dbReference type="STRING" id="243275.TDE_1504"/>
<dbReference type="PaxDb" id="243275-TDE_1504"/>
<dbReference type="GeneID" id="2739905"/>
<dbReference type="KEGG" id="tde:TDE_1504"/>
<dbReference type="PATRIC" id="fig|243275.7.peg.1443"/>
<dbReference type="eggNOG" id="COG0254">
    <property type="taxonomic scope" value="Bacteria"/>
</dbReference>
<dbReference type="HOGENOM" id="CLU_114306_4_3_12"/>
<dbReference type="OrthoDB" id="9803251at2"/>
<dbReference type="Proteomes" id="UP000008212">
    <property type="component" value="Chromosome"/>
</dbReference>
<dbReference type="GO" id="GO:1990904">
    <property type="term" value="C:ribonucleoprotein complex"/>
    <property type="evidence" value="ECO:0007669"/>
    <property type="project" value="UniProtKB-KW"/>
</dbReference>
<dbReference type="GO" id="GO:0005840">
    <property type="term" value="C:ribosome"/>
    <property type="evidence" value="ECO:0007669"/>
    <property type="project" value="UniProtKB-KW"/>
</dbReference>
<dbReference type="GO" id="GO:0046872">
    <property type="term" value="F:metal ion binding"/>
    <property type="evidence" value="ECO:0007669"/>
    <property type="project" value="UniProtKB-KW"/>
</dbReference>
<dbReference type="GO" id="GO:0019843">
    <property type="term" value="F:rRNA binding"/>
    <property type="evidence" value="ECO:0007669"/>
    <property type="project" value="UniProtKB-KW"/>
</dbReference>
<dbReference type="GO" id="GO:0003735">
    <property type="term" value="F:structural constituent of ribosome"/>
    <property type="evidence" value="ECO:0007669"/>
    <property type="project" value="InterPro"/>
</dbReference>
<dbReference type="GO" id="GO:0006412">
    <property type="term" value="P:translation"/>
    <property type="evidence" value="ECO:0007669"/>
    <property type="project" value="UniProtKB-UniRule"/>
</dbReference>
<dbReference type="Gene3D" id="4.10.830.30">
    <property type="entry name" value="Ribosomal protein L31"/>
    <property type="match status" value="1"/>
</dbReference>
<dbReference type="HAMAP" id="MF_00501">
    <property type="entry name" value="Ribosomal_bL31_1"/>
    <property type="match status" value="1"/>
</dbReference>
<dbReference type="InterPro" id="IPR034704">
    <property type="entry name" value="Ribosomal_bL28/bL31-like_sf"/>
</dbReference>
<dbReference type="InterPro" id="IPR002150">
    <property type="entry name" value="Ribosomal_bL31"/>
</dbReference>
<dbReference type="InterPro" id="IPR027491">
    <property type="entry name" value="Ribosomal_bL31_A"/>
</dbReference>
<dbReference type="InterPro" id="IPR042105">
    <property type="entry name" value="Ribosomal_bL31_sf"/>
</dbReference>
<dbReference type="NCBIfam" id="TIGR00105">
    <property type="entry name" value="L31"/>
    <property type="match status" value="1"/>
</dbReference>
<dbReference type="NCBIfam" id="NF000612">
    <property type="entry name" value="PRK00019.1"/>
    <property type="match status" value="1"/>
</dbReference>
<dbReference type="NCBIfam" id="NF001809">
    <property type="entry name" value="PRK00528.1"/>
    <property type="match status" value="1"/>
</dbReference>
<dbReference type="PANTHER" id="PTHR33280">
    <property type="entry name" value="50S RIBOSOMAL PROTEIN L31, CHLOROPLASTIC"/>
    <property type="match status" value="1"/>
</dbReference>
<dbReference type="PANTHER" id="PTHR33280:SF1">
    <property type="entry name" value="LARGE RIBOSOMAL SUBUNIT PROTEIN BL31C"/>
    <property type="match status" value="1"/>
</dbReference>
<dbReference type="Pfam" id="PF01197">
    <property type="entry name" value="Ribosomal_L31"/>
    <property type="match status" value="1"/>
</dbReference>
<dbReference type="PRINTS" id="PR01249">
    <property type="entry name" value="RIBOSOMALL31"/>
</dbReference>
<dbReference type="SUPFAM" id="SSF143800">
    <property type="entry name" value="L28p-like"/>
    <property type="match status" value="1"/>
</dbReference>
<dbReference type="PROSITE" id="PS01143">
    <property type="entry name" value="RIBOSOMAL_L31"/>
    <property type="match status" value="1"/>
</dbReference>
<comment type="function">
    <text evidence="1">Binds the 23S rRNA.</text>
</comment>
<comment type="cofactor">
    <cofactor evidence="1">
        <name>Zn(2+)</name>
        <dbReference type="ChEBI" id="CHEBI:29105"/>
    </cofactor>
    <text evidence="1">Binds 1 zinc ion per subunit.</text>
</comment>
<comment type="subunit">
    <text evidence="1">Part of the 50S ribosomal subunit.</text>
</comment>
<comment type="similarity">
    <text evidence="1">Belongs to the bacterial ribosomal protein bL31 family. Type A subfamily.</text>
</comment>
<gene>
    <name evidence="1" type="primary">rpmE</name>
    <name type="ordered locus">TDE_1504</name>
</gene>
<accession>Q73MK4</accession>
<organism>
    <name type="scientific">Treponema denticola (strain ATCC 35405 / DSM 14222 / CIP 103919 / JCM 8153 / KCTC 15104)</name>
    <dbReference type="NCBI Taxonomy" id="243275"/>
    <lineage>
        <taxon>Bacteria</taxon>
        <taxon>Pseudomonadati</taxon>
        <taxon>Spirochaetota</taxon>
        <taxon>Spirochaetia</taxon>
        <taxon>Spirochaetales</taxon>
        <taxon>Treponemataceae</taxon>
        <taxon>Treponema</taxon>
    </lineage>
</organism>
<keyword id="KW-0479">Metal-binding</keyword>
<keyword id="KW-1185">Reference proteome</keyword>
<keyword id="KW-0687">Ribonucleoprotein</keyword>
<keyword id="KW-0689">Ribosomal protein</keyword>
<keyword id="KW-0694">RNA-binding</keyword>
<keyword id="KW-0699">rRNA-binding</keyword>
<keyword id="KW-0862">Zinc</keyword>
<sequence length="67" mass="7749">MKKDIHPKYEETTVTCACGNVINTRSTVKDIKVEICSQCHPFFTGKQKLVDTAGRIDRFKKRYNIKD</sequence>
<protein>
    <recommendedName>
        <fullName evidence="1">Large ribosomal subunit protein bL31</fullName>
    </recommendedName>
    <alternativeName>
        <fullName evidence="2">50S ribosomal protein L31</fullName>
    </alternativeName>
</protein>